<keyword id="KW-0007">Acetylation</keyword>
<keyword id="KW-0025">Alternative splicing</keyword>
<keyword id="KW-0244">Early protein</keyword>
<keyword id="KW-1035">Host cytoplasm</keyword>
<keyword id="KW-1048">Host nucleus</keyword>
<keyword id="KW-0553">Oncogene</keyword>
<sequence length="195" mass="22811">MDRVLSRADKERLLELLKLPRQLWGDFGRMQQAYKQQSLLLHPDKGGSHALMQELNSLWGTFKTEVYNLRMNLGGTGFQVRRLHADGWNLSTKDTFGDRYYQRFCRMPLTCLVNVKYSSCSCILCLLRKQHRELKDKCDARCLVLGECFCLECYMQWFGTPTRDVLNLYADFIASMPIDWLDLDVHSVYNPRLSP</sequence>
<protein>
    <recommendedName>
        <fullName>Small t antigen</fullName>
        <shortName>ST</shortName>
        <shortName>ST-AG</shortName>
    </recommendedName>
</protein>
<organismHost>
    <name type="scientific">Mus musculus</name>
    <name type="common">Mouse</name>
    <dbReference type="NCBI Taxonomy" id="10090"/>
</organismHost>
<proteinExistence type="inferred from homology"/>
<comment type="function">
    <text evidence="1">Promotes efficient viral genome replication by accelerating both G1 and S phase progression of the cell cycle. Inhibits host PP2A by binding to the A subunit, thereby displacing lower affinity regulatory B subunit. Inactivation of PP2A in turn results in the transactivation of cyclin A and cyclin D1 promoters. Late during the infection cycle, ST may induce dephosphorylation of host MTOR, leading to the inhibition of cap-dependent translation. May establish and maintain high levels of viral genomes during persistent infection in cell culture.</text>
</comment>
<comment type="subunit">
    <text evidence="1">Interacts with host PPP2R1A; the interaction inhibits PP2A activity.</text>
</comment>
<comment type="subcellular location">
    <subcellularLocation>
        <location>Host cytoplasm</location>
    </subcellularLocation>
    <subcellularLocation>
        <location evidence="1">Host nucleus</location>
    </subcellularLocation>
</comment>
<comment type="alternative products">
    <event type="alternative splicing"/>
    <isoform>
        <id>P68834-1</id>
        <name>Small t antigen</name>
        <sequence type="displayed"/>
    </isoform>
    <isoform>
        <id>P0DOJ8-1</id>
        <id>P03076-1</id>
        <name>Middle T antigen</name>
        <sequence type="external"/>
    </isoform>
    <isoform>
        <id>P0DOJ5-1</id>
        <id>P03074-1</id>
        <name>Large T antigen</name>
        <sequence type="external"/>
    </isoform>
</comment>
<comment type="domain">
    <text evidence="1">The common region of ST and LT proteins comprises the J domain. This domain is essential for multiple viral activities, including virion assembly, viral DNA replication, transformation and transcriptional activation. This domain is also required for cyclin A-transactivating activity of ST.</text>
</comment>
<name>ST_POVM3</name>
<reference key="1">
    <citation type="journal article" date="1979" name="Cell">
        <title>The nucleotide sequence and genome organization of the polyoma early region: extensive nucleotide and amino acid homology with SV40.</title>
        <authorList>
            <person name="Friedmann T."/>
            <person name="Esty A."/>
            <person name="LaPorte P."/>
            <person name="Deininger P.L."/>
        </authorList>
    </citation>
    <scope>NUCLEOTIDE SEQUENCE [GENOMIC DNA]</scope>
</reference>
<dbReference type="EMBL" id="J02289">
    <property type="protein sequence ID" value="AAA46874.1"/>
    <property type="molecule type" value="Genomic_DNA"/>
</dbReference>
<dbReference type="PIR" id="C03635">
    <property type="entry name" value="TVVPA"/>
</dbReference>
<dbReference type="SMR" id="P68834"/>
<dbReference type="IntAct" id="P68834">
    <property type="interactions" value="1"/>
</dbReference>
<dbReference type="MINT" id="P68834"/>
<dbReference type="Proteomes" id="UP000006847">
    <property type="component" value="Genome"/>
</dbReference>
<dbReference type="GO" id="GO:0030430">
    <property type="term" value="C:host cell cytoplasm"/>
    <property type="evidence" value="ECO:0007669"/>
    <property type="project" value="UniProtKB-SubCell"/>
</dbReference>
<dbReference type="GO" id="GO:0042025">
    <property type="term" value="C:host cell nucleus"/>
    <property type="evidence" value="ECO:0007669"/>
    <property type="project" value="UniProtKB-SubCell"/>
</dbReference>
<dbReference type="Gene3D" id="1.10.287.110">
    <property type="entry name" value="DnaJ domain"/>
    <property type="match status" value="1"/>
</dbReference>
<dbReference type="Gene3D" id="1.20.120.1860">
    <property type="entry name" value="Small t-antigen, unique domain"/>
    <property type="match status" value="1"/>
</dbReference>
<dbReference type="InterPro" id="IPR001623">
    <property type="entry name" value="DnaJ_domain"/>
</dbReference>
<dbReference type="InterPro" id="IPR036869">
    <property type="entry name" value="J_dom_sf"/>
</dbReference>
<dbReference type="InterPro" id="IPR003354">
    <property type="entry name" value="Papo_T_antigen"/>
</dbReference>
<dbReference type="InterPro" id="IPR036092">
    <property type="entry name" value="Papo_T_antigensf"/>
</dbReference>
<dbReference type="Pfam" id="PF02380">
    <property type="entry name" value="Papo_T_antigen"/>
    <property type="match status" value="1"/>
</dbReference>
<dbReference type="SMART" id="SM00271">
    <property type="entry name" value="DnaJ"/>
    <property type="match status" value="1"/>
</dbReference>
<dbReference type="SUPFAM" id="SSF46565">
    <property type="entry name" value="Chaperone J-domain"/>
    <property type="match status" value="1"/>
</dbReference>
<dbReference type="SUPFAM" id="SSF161240">
    <property type="entry name" value="T-antigen specific domain-like"/>
    <property type="match status" value="1"/>
</dbReference>
<evidence type="ECO:0000250" key="1">
    <source>
        <dbReference type="UniProtKB" id="P03081"/>
    </source>
</evidence>
<feature type="chain" id="PRO_0000115058" description="Small t antigen">
    <location>
        <begin position="1"/>
        <end position="195"/>
    </location>
</feature>
<feature type="domain" description="J">
    <location>
        <begin position="12"/>
        <end position="75"/>
    </location>
</feature>
<feature type="modified residue" description="N-acetylmethionine; by host" evidence="1">
    <location>
        <position position="1"/>
    </location>
</feature>
<organism>
    <name type="scientific">Murine polyomavirus (strain A3)</name>
    <name type="common">MPyV</name>
    <dbReference type="NCBI Taxonomy" id="157703"/>
    <lineage>
        <taxon>Viruses</taxon>
        <taxon>Monodnaviria</taxon>
        <taxon>Shotokuvirae</taxon>
        <taxon>Cossaviricota</taxon>
        <taxon>Papovaviricetes</taxon>
        <taxon>Sepolyvirales</taxon>
        <taxon>Polyomaviridae</taxon>
        <taxon>Alphapolyomavirus</taxon>
        <taxon>Mus musculus polyomavirus 1</taxon>
    </lineage>
</organism>
<accession>P68834</accession>
<accession>P03078</accession>